<sequence>MLVQITALAFLAGIASAGVVVGGYGDGVGVGLGGLGGGLGGVGVGLGGVGVVGGGHGVVDLHTPAHYQFKYGVEDHRTGDRKQQAEVRVGDVVKGEYSLAEPDGTVRVVKYTADDHNGFNAVVSRVGHAVHPQVLVRKAVVPVATHGVVGVGGLGGLGGVGLGGVGLGGVGLGGGLGGVGLLGGRGGLDRGILGGHGGSELKFKRALI</sequence>
<proteinExistence type="evidence at protein level"/>
<comment type="function">
    <text>Cuticular proteins play a significant role in determining the physical properties of cuticles.</text>
</comment>
<comment type="tissue specificity">
    <text>Epidermal regions synthesizing hard cuticle.</text>
</comment>
<comment type="developmental stage">
    <text>Preecdysial adult cuticle deposition.</text>
</comment>
<name>CU20_TENMO</name>
<feature type="signal peptide" evidence="1">
    <location>
        <begin position="1"/>
        <end position="17"/>
    </location>
</feature>
<feature type="chain" id="PRO_0000006414" description="Adult-specific cuticular protein ACP-20">
    <location>
        <begin position="18"/>
        <end position="208"/>
    </location>
</feature>
<feature type="repeat" description="1">
    <location>
        <begin position="34"/>
        <end position="43"/>
    </location>
</feature>
<feature type="domain" description="Chitin-binding type R&amp;R" evidence="2">
    <location>
        <begin position="64"/>
        <end position="135"/>
    </location>
</feature>
<feature type="repeat" description="2">
    <location>
        <begin position="171"/>
        <end position="180"/>
    </location>
</feature>
<feature type="region of interest" description="2 X 10 AA repeats">
    <location>
        <begin position="34"/>
        <end position="180"/>
    </location>
</feature>
<reference key="1">
    <citation type="journal article" date="1992" name="Eur. J. Biochem.">
        <title>cDNA cloning and deduced amino acid sequence of a major, glycine-rich cuticular protein from the coleopteran Tenebrio molitor. Temporal and spatial distribution of the transcript during metamorphosis.</title>
        <authorList>
            <person name="Charles J.-P."/>
            <person name="Bouhin H."/>
            <person name="Quennedey B."/>
            <person name="Courrent A."/>
            <person name="Delachambre J."/>
        </authorList>
    </citation>
    <scope>NUCLEOTIDE SEQUENCE [MRNA]</scope>
    <scope>PROTEIN SEQUENCE OF 95-107</scope>
</reference>
<protein>
    <recommendedName>
        <fullName>Adult-specific cuticular protein ACP-20</fullName>
    </recommendedName>
</protein>
<accession>P26967</accession>
<organism>
    <name type="scientific">Tenebrio molitor</name>
    <name type="common">Yellow mealworm beetle</name>
    <dbReference type="NCBI Taxonomy" id="7067"/>
    <lineage>
        <taxon>Eukaryota</taxon>
        <taxon>Metazoa</taxon>
        <taxon>Ecdysozoa</taxon>
        <taxon>Arthropoda</taxon>
        <taxon>Hexapoda</taxon>
        <taxon>Insecta</taxon>
        <taxon>Pterygota</taxon>
        <taxon>Neoptera</taxon>
        <taxon>Endopterygota</taxon>
        <taxon>Coleoptera</taxon>
        <taxon>Polyphaga</taxon>
        <taxon>Cucujiformia</taxon>
        <taxon>Tenebrionidae</taxon>
        <taxon>Tenebrio</taxon>
    </lineage>
</organism>
<gene>
    <name type="primary">ACP20</name>
</gene>
<dbReference type="EMBL" id="X63459">
    <property type="protein sequence ID" value="CAA45057.1"/>
    <property type="molecule type" value="mRNA"/>
</dbReference>
<dbReference type="PIR" id="S23463">
    <property type="entry name" value="S23463"/>
</dbReference>
<dbReference type="GO" id="GO:0031012">
    <property type="term" value="C:extracellular matrix"/>
    <property type="evidence" value="ECO:0007669"/>
    <property type="project" value="TreeGrafter"/>
</dbReference>
<dbReference type="GO" id="GO:0005615">
    <property type="term" value="C:extracellular space"/>
    <property type="evidence" value="ECO:0007669"/>
    <property type="project" value="TreeGrafter"/>
</dbReference>
<dbReference type="GO" id="GO:0042302">
    <property type="term" value="F:structural constituent of cuticle"/>
    <property type="evidence" value="ECO:0007669"/>
    <property type="project" value="UniProtKB-KW"/>
</dbReference>
<dbReference type="InterPro" id="IPR031311">
    <property type="entry name" value="CHIT_BIND_RR_consensus"/>
</dbReference>
<dbReference type="InterPro" id="IPR000618">
    <property type="entry name" value="Insect_cuticle"/>
</dbReference>
<dbReference type="InterPro" id="IPR051217">
    <property type="entry name" value="Insect_Cuticle_Struc_Prot"/>
</dbReference>
<dbReference type="PANTHER" id="PTHR12236:SF75">
    <property type="entry name" value="CUTICULAR PROTEIN 62BB, ISOFORM A"/>
    <property type="match status" value="1"/>
</dbReference>
<dbReference type="PANTHER" id="PTHR12236">
    <property type="entry name" value="STRUCTURAL CONTITUENT OF CUTICLE"/>
    <property type="match status" value="1"/>
</dbReference>
<dbReference type="Pfam" id="PF00379">
    <property type="entry name" value="Chitin_bind_4"/>
    <property type="match status" value="1"/>
</dbReference>
<dbReference type="PRINTS" id="PR00947">
    <property type="entry name" value="CUTICLE"/>
</dbReference>
<dbReference type="PROSITE" id="PS00233">
    <property type="entry name" value="CHIT_BIND_RR_1"/>
    <property type="match status" value="1"/>
</dbReference>
<dbReference type="PROSITE" id="PS51155">
    <property type="entry name" value="CHIT_BIND_RR_2"/>
    <property type="match status" value="1"/>
</dbReference>
<evidence type="ECO:0000255" key="1"/>
<evidence type="ECO:0000255" key="2">
    <source>
        <dbReference type="PROSITE-ProRule" id="PRU00497"/>
    </source>
</evidence>
<keyword id="KW-0193">Cuticle</keyword>
<keyword id="KW-0903">Direct protein sequencing</keyword>
<keyword id="KW-0677">Repeat</keyword>
<keyword id="KW-0732">Signal</keyword>